<feature type="chain" id="PRO_0000239373" description="KH domain-containing RNA-binding protein QKI">
    <location>
        <begin position="1"/>
        <end position="341"/>
    </location>
</feature>
<feature type="domain" description="KH">
    <location>
        <begin position="87"/>
        <end position="153"/>
    </location>
</feature>
<feature type="region of interest" description="Qua1 domain; involved in homodimerization" evidence="1">
    <location>
        <begin position="11"/>
        <end position="82"/>
    </location>
</feature>
<feature type="region of interest" description="Qua2 domain; involved in RNA binding" evidence="8">
    <location>
        <begin position="182"/>
        <end position="213"/>
    </location>
</feature>
<feature type="short sequence motif" description="SH3-binding">
    <location>
        <begin position="276"/>
        <end position="279"/>
    </location>
</feature>
<feature type="short sequence motif" description="Nuclear localization signal" evidence="2">
    <location>
        <begin position="324"/>
        <end position="330"/>
    </location>
</feature>
<feature type="site" description="Involved in RNA binding" evidence="8">
    <location>
        <position position="97"/>
    </location>
</feature>
<feature type="site" description="Involved in RNA binding" evidence="8">
    <location>
        <position position="120"/>
    </location>
</feature>
<feature type="site" description="Involved in RNA binding" evidence="8">
    <location>
        <position position="124"/>
    </location>
</feature>
<feature type="site" description="Involved in RNA binding" evidence="8">
    <location>
        <position position="130"/>
    </location>
</feature>
<feature type="site" description="Involved in RNA binding" evidence="8">
    <location>
        <position position="190"/>
    </location>
</feature>
<feature type="site" description="Involved in RNA binding" evidence="8">
    <location>
        <position position="193"/>
    </location>
</feature>
<feature type="modified residue" description="Phosphoserine" evidence="26">
    <location>
        <position position="188"/>
    </location>
</feature>
<feature type="modified residue" description="Omega-N-methylarginine" evidence="27">
    <location>
        <position position="227"/>
    </location>
</feature>
<feature type="modified residue" description="Asymmetric dimethylarginine; by CARM1; alternate" evidence="7">
    <location>
        <position position="242"/>
    </location>
</feature>
<feature type="modified residue" description="Omega-N-methylarginine; alternate" evidence="27">
    <location>
        <position position="242"/>
    </location>
</feature>
<feature type="modified residue" description="Omega-N-methylarginine" evidence="2">
    <location>
        <position position="256"/>
    </location>
</feature>
<feature type="splice variant" id="VSP_019188" description="In isoform 2 and isoform 3." evidence="23">
    <location>
        <begin position="213"/>
        <end position="220"/>
    </location>
</feature>
<feature type="splice variant" id="VSP_019190" description="In isoform 3 and isoform QKI7." evidence="17 22 23">
    <original>GAVATKVRRHDMRVHPYQRIVTADRAATGN</original>
    <variation>EWIEMPVMPDISAH</variation>
    <location>
        <begin position="312"/>
        <end position="341"/>
    </location>
</feature>
<feature type="splice variant" id="VSP_019189" description="In isoform QKI6." evidence="22">
    <original>GAVATKVRRHDMRVHPYQRIVTADRAATGN</original>
    <variation>GMAFPTKG</variation>
    <location>
        <begin position="312"/>
        <end position="341"/>
    </location>
</feature>
<feature type="splice variant" id="VSP_019191" description="In isoform QKI7B." evidence="17">
    <original>GAVATKVRRHDMRVHPYQRIVTADRAATGN</original>
    <variation>GKFFSPWG</variation>
    <location>
        <begin position="312"/>
        <end position="341"/>
    </location>
</feature>
<feature type="sequence variant" id="VAR_036051" description="In a colorectal cancer sample; somatic mutation; dbSNP:rs1258390251." evidence="5">
    <original>R</original>
    <variation>Q</variation>
    <location>
        <position position="336"/>
    </location>
</feature>
<feature type="mutagenesis site" description="Decrease in target mRNA abundance and 10-fold decrease in RNA binding affinity; when associated with A-130." evidence="8">
    <original>N</original>
    <variation>A</variation>
    <location>
        <position position="97"/>
    </location>
</feature>
<feature type="mutagenesis site" description="Decrease in target mRNA abundance and 20-fold decrease in RNA binding affinity; when associated with A-124." evidence="8">
    <original>K</original>
    <variation>A</variation>
    <location>
        <position position="120"/>
    </location>
</feature>
<feature type="mutagenesis site" description="Decrease in target mRNA abundance and 20-fold decrease in RNA binding affinity; when associated with A-120." evidence="8">
    <original>R</original>
    <variation>A</variation>
    <location>
        <position position="124"/>
    </location>
</feature>
<feature type="mutagenesis site" description="Decrease in target mRNA abundance and 10-fold decrease in RNA binding affinity; when associated with A-97." evidence="8">
    <original>R</original>
    <variation>A</variation>
    <location>
        <position position="130"/>
    </location>
</feature>
<feature type="mutagenesis site" description="Decrease in target mRNA abundance and 124-fold decrease in RNA binding affinity; when associated with A-193." evidence="8">
    <original>K</original>
    <variation>A</variation>
    <location>
        <position position="190"/>
    </location>
</feature>
<feature type="mutagenesis site" description="Decrease in target mRNA abundance and 124-fold decrease in RNA binding affinity; when associated with A-190." evidence="8">
    <original>Q</original>
    <variation>A</variation>
    <location>
        <position position="193"/>
    </location>
</feature>
<feature type="sequence conflict" description="In Ref. 3; ABC88600." evidence="24" ref="3">
    <original>S</original>
    <variation>G</variation>
    <location>
        <position position="30"/>
    </location>
</feature>
<feature type="sequence conflict" description="In Ref. 5; AAH12222." evidence="24" ref="5">
    <original>N</original>
    <variation>D</variation>
    <location>
        <position position="208"/>
    </location>
</feature>
<organism>
    <name type="scientific">Homo sapiens</name>
    <name type="common">Human</name>
    <dbReference type="NCBI Taxonomy" id="9606"/>
    <lineage>
        <taxon>Eukaryota</taxon>
        <taxon>Metazoa</taxon>
        <taxon>Chordata</taxon>
        <taxon>Craniata</taxon>
        <taxon>Vertebrata</taxon>
        <taxon>Euteleostomi</taxon>
        <taxon>Mammalia</taxon>
        <taxon>Eutheria</taxon>
        <taxon>Euarchontoglires</taxon>
        <taxon>Primates</taxon>
        <taxon>Haplorrhini</taxon>
        <taxon>Catarrhini</taxon>
        <taxon>Hominidae</taxon>
        <taxon>Homo</taxon>
    </lineage>
</organism>
<dbReference type="EMBL" id="AB067798">
    <property type="protein sequence ID" value="BAB69496.1"/>
    <property type="molecule type" value="mRNA"/>
</dbReference>
<dbReference type="EMBL" id="AB067799">
    <property type="protein sequence ID" value="BAB69497.1"/>
    <property type="molecule type" value="mRNA"/>
</dbReference>
<dbReference type="EMBL" id="AB067800">
    <property type="protein sequence ID" value="BAB69498.1"/>
    <property type="molecule type" value="mRNA"/>
</dbReference>
<dbReference type="EMBL" id="AB067801">
    <property type="protein sequence ID" value="BAB69499.1"/>
    <property type="molecule type" value="mRNA"/>
</dbReference>
<dbReference type="EMBL" id="AB067808">
    <property type="protein sequence ID" value="BAB69681.1"/>
    <property type="molecule type" value="Genomic_DNA"/>
</dbReference>
<dbReference type="EMBL" id="AF142417">
    <property type="protein sequence ID" value="AAF63412.1"/>
    <property type="status" value="ALT_SEQ"/>
    <property type="molecule type" value="mRNA"/>
</dbReference>
<dbReference type="EMBL" id="AF142418">
    <property type="protein sequence ID" value="AAF63413.1"/>
    <property type="status" value="ALT_SEQ"/>
    <property type="molecule type" value="mRNA"/>
</dbReference>
<dbReference type="EMBL" id="AF142419">
    <property type="protein sequence ID" value="AAF63414.1"/>
    <property type="status" value="ALT_SEQ"/>
    <property type="molecule type" value="mRNA"/>
</dbReference>
<dbReference type="EMBL" id="AF142420">
    <property type="protein sequence ID" value="AAF63415.1"/>
    <property type="status" value="ALT_SEQ"/>
    <property type="molecule type" value="mRNA"/>
</dbReference>
<dbReference type="EMBL" id="AF142421">
    <property type="protein sequence ID" value="AAF63416.1"/>
    <property type="status" value="ALT_SEQ"/>
    <property type="molecule type" value="mRNA"/>
</dbReference>
<dbReference type="EMBL" id="AF142422">
    <property type="protein sequence ID" value="AAF63417.1"/>
    <property type="status" value="ALT_SEQ"/>
    <property type="molecule type" value="mRNA"/>
</dbReference>
<dbReference type="EMBL" id="AY780788">
    <property type="protein sequence ID" value="AAV98358.1"/>
    <property type="molecule type" value="mRNA"/>
</dbReference>
<dbReference type="EMBL" id="DQ323998">
    <property type="protein sequence ID" value="ABC88600.1"/>
    <property type="molecule type" value="mRNA"/>
</dbReference>
<dbReference type="EMBL" id="AL356119">
    <property type="status" value="NOT_ANNOTATED_CDS"/>
    <property type="molecule type" value="Genomic_DNA"/>
</dbReference>
<dbReference type="EMBL" id="AL031781">
    <property type="status" value="NOT_ANNOTATED_CDS"/>
    <property type="molecule type" value="Genomic_DNA"/>
</dbReference>
<dbReference type="EMBL" id="BC012222">
    <property type="protein sequence ID" value="AAH12222.1"/>
    <property type="molecule type" value="mRNA"/>
</dbReference>
<dbReference type="EMBL" id="BC019917">
    <property type="protein sequence ID" value="AAH19917.1"/>
    <property type="molecule type" value="mRNA"/>
</dbReference>
<dbReference type="EMBL" id="AK027309">
    <property type="protein sequence ID" value="BAB55032.1"/>
    <property type="status" value="ALT_INIT"/>
    <property type="molecule type" value="mRNA"/>
</dbReference>
<dbReference type="CCDS" id="CCDS43525.1">
    <molecule id="Q96PU8-8"/>
</dbReference>
<dbReference type="CCDS" id="CCDS5285.1">
    <molecule id="Q96PU8-1"/>
</dbReference>
<dbReference type="CCDS" id="CCDS5286.1">
    <molecule id="Q96PU8-9"/>
</dbReference>
<dbReference type="CCDS" id="CCDS5287.1">
    <molecule id="Q96PU8-6"/>
</dbReference>
<dbReference type="CCDS" id="CCDS75546.1">
    <molecule id="Q96PU8-3"/>
</dbReference>
<dbReference type="RefSeq" id="NP_001288014.1">
    <molecule id="Q96PU8-3"/>
    <property type="nucleotide sequence ID" value="NM_001301085.2"/>
</dbReference>
<dbReference type="RefSeq" id="NP_006766.1">
    <molecule id="Q96PU8-1"/>
    <property type="nucleotide sequence ID" value="NM_006775.3"/>
</dbReference>
<dbReference type="RefSeq" id="NP_996735.1">
    <molecule id="Q96PU8-9"/>
    <property type="nucleotide sequence ID" value="NM_206853.3"/>
</dbReference>
<dbReference type="RefSeq" id="NP_996736.1">
    <molecule id="Q96PU8-6"/>
    <property type="nucleotide sequence ID" value="NM_206854.3"/>
</dbReference>
<dbReference type="RefSeq" id="NP_996737.1">
    <molecule id="Q96PU8-8"/>
    <property type="nucleotide sequence ID" value="NM_206855.3"/>
</dbReference>
<dbReference type="RefSeq" id="XP_011534561.1">
    <property type="nucleotide sequence ID" value="XM_011536259.2"/>
</dbReference>
<dbReference type="PDB" id="4JVH">
    <property type="method" value="X-ray"/>
    <property type="resolution" value="3.50 A"/>
    <property type="chains" value="A=7-214"/>
</dbReference>
<dbReference type="PDBsum" id="4JVH"/>
<dbReference type="SMR" id="Q96PU8"/>
<dbReference type="BioGRID" id="114834">
    <property type="interactions" value="205"/>
</dbReference>
<dbReference type="FunCoup" id="Q96PU8">
    <property type="interactions" value="2673"/>
</dbReference>
<dbReference type="IntAct" id="Q96PU8">
    <property type="interactions" value="595"/>
</dbReference>
<dbReference type="MINT" id="Q96PU8"/>
<dbReference type="STRING" id="9606.ENSP00000355094"/>
<dbReference type="GlyCosmos" id="Q96PU8">
    <property type="glycosylation" value="1 site, 1 glycan"/>
</dbReference>
<dbReference type="GlyGen" id="Q96PU8">
    <property type="glycosylation" value="5 sites, 2 N-linked glycans (2 sites), 1 O-linked glycan (2 sites)"/>
</dbReference>
<dbReference type="iPTMnet" id="Q96PU8"/>
<dbReference type="PhosphoSitePlus" id="Q96PU8"/>
<dbReference type="SwissPalm" id="Q96PU8"/>
<dbReference type="BioMuta" id="QKI"/>
<dbReference type="DMDM" id="74761039"/>
<dbReference type="jPOST" id="Q96PU8"/>
<dbReference type="MassIVE" id="Q96PU8"/>
<dbReference type="PaxDb" id="9606-ENSP00000355094"/>
<dbReference type="PeptideAtlas" id="Q96PU8"/>
<dbReference type="ProteomicsDB" id="77761">
    <molecule id="Q96PU8-1"/>
</dbReference>
<dbReference type="ProteomicsDB" id="77762">
    <molecule id="Q96PU8-3"/>
</dbReference>
<dbReference type="ProteomicsDB" id="77763">
    <molecule id="Q96PU8-5"/>
</dbReference>
<dbReference type="ProteomicsDB" id="77764">
    <molecule id="Q96PU8-6"/>
</dbReference>
<dbReference type="ProteomicsDB" id="77765">
    <molecule id="Q96PU8-8"/>
</dbReference>
<dbReference type="ProteomicsDB" id="77766">
    <molecule id="Q96PU8-9"/>
</dbReference>
<dbReference type="Pumba" id="Q96PU8"/>
<dbReference type="ABCD" id="Q96PU8">
    <property type="antibodies" value="5 sequenced antibodies"/>
</dbReference>
<dbReference type="Antibodypedia" id="20048">
    <property type="antibodies" value="465 antibodies from 42 providers"/>
</dbReference>
<dbReference type="DNASU" id="9444"/>
<dbReference type="Ensembl" id="ENST00000275262.11">
    <molecule id="Q96PU8-6"/>
    <property type="protein sequence ID" value="ENSP00000275262.7"/>
    <property type="gene ID" value="ENSG00000112531.17"/>
</dbReference>
<dbReference type="Ensembl" id="ENST00000361195.6">
    <molecule id="Q96PU8-3"/>
    <property type="protein sequence ID" value="ENSP00000354867.2"/>
    <property type="gene ID" value="ENSG00000112531.17"/>
</dbReference>
<dbReference type="Ensembl" id="ENST00000361752.8">
    <molecule id="Q96PU8-1"/>
    <property type="protein sequence ID" value="ENSP00000355094.3"/>
    <property type="gene ID" value="ENSG00000112531.17"/>
</dbReference>
<dbReference type="Ensembl" id="ENST00000361758.8">
    <molecule id="Q96PU8-9"/>
    <property type="protein sequence ID" value="ENSP00000354951.4"/>
    <property type="gene ID" value="ENSG00000112531.17"/>
</dbReference>
<dbReference type="Ensembl" id="ENST00000392127.6">
    <molecule id="Q96PU8-8"/>
    <property type="protein sequence ID" value="ENSP00000375973.2"/>
    <property type="gene ID" value="ENSG00000112531.17"/>
</dbReference>
<dbReference type="Ensembl" id="ENST00000424802.7">
    <molecule id="Q96PU8-5"/>
    <property type="protein sequence ID" value="ENSP00000408382.3"/>
    <property type="gene ID" value="ENSG00000112531.17"/>
</dbReference>
<dbReference type="Ensembl" id="ENST00000453779.6">
    <molecule id="Q96PU8-9"/>
    <property type="protein sequence ID" value="ENSP00000408775.2"/>
    <property type="gene ID" value="ENSG00000112531.17"/>
</dbReference>
<dbReference type="GeneID" id="9444"/>
<dbReference type="KEGG" id="hsa:9444"/>
<dbReference type="MANE-Select" id="ENST00000361752.8">
    <property type="protein sequence ID" value="ENSP00000355094.3"/>
    <property type="RefSeq nucleotide sequence ID" value="NM_006775.3"/>
    <property type="RefSeq protein sequence ID" value="NP_006766.1"/>
</dbReference>
<dbReference type="UCSC" id="uc003que.4">
    <molecule id="Q96PU8-1"/>
    <property type="organism name" value="human"/>
</dbReference>
<dbReference type="AGR" id="HGNC:21100"/>
<dbReference type="CTD" id="9444"/>
<dbReference type="DisGeNET" id="9444"/>
<dbReference type="GeneCards" id="QKI"/>
<dbReference type="HGNC" id="HGNC:21100">
    <property type="gene designation" value="QKI"/>
</dbReference>
<dbReference type="HPA" id="ENSG00000112531">
    <property type="expression patterns" value="Tissue enhanced (brain, tongue)"/>
</dbReference>
<dbReference type="MalaCards" id="QKI"/>
<dbReference type="MIM" id="609590">
    <property type="type" value="gene"/>
</dbReference>
<dbReference type="neXtProt" id="NX_Q96PU8"/>
<dbReference type="OpenTargets" id="ENSG00000112531"/>
<dbReference type="Orphanet" id="251671">
    <property type="disease" value="Angiocentric glioma"/>
</dbReference>
<dbReference type="PharmGKB" id="PA134912180"/>
<dbReference type="VEuPathDB" id="HostDB:ENSG00000112531"/>
<dbReference type="eggNOG" id="KOG1588">
    <property type="taxonomic scope" value="Eukaryota"/>
</dbReference>
<dbReference type="GeneTree" id="ENSGT00940000155310"/>
<dbReference type="HOGENOM" id="CLU_046595_2_0_1"/>
<dbReference type="InParanoid" id="Q96PU8"/>
<dbReference type="OMA" id="WICAEIS"/>
<dbReference type="OrthoDB" id="6777263at2759"/>
<dbReference type="PAN-GO" id="Q96PU8">
    <property type="GO annotations" value="3 GO annotations based on evolutionary models"/>
</dbReference>
<dbReference type="PhylomeDB" id="Q96PU8"/>
<dbReference type="TreeFam" id="TF314878"/>
<dbReference type="PathwayCommons" id="Q96PU8"/>
<dbReference type="Reactome" id="R-HSA-6802952">
    <property type="pathway name" value="Signaling by BRAF and RAF1 fusions"/>
</dbReference>
<dbReference type="SignaLink" id="Q96PU8"/>
<dbReference type="BioGRID-ORCS" id="9444">
    <property type="hits" value="34 hits in 1168 CRISPR screens"/>
</dbReference>
<dbReference type="CD-CODE" id="232F8A39">
    <property type="entry name" value="P-body"/>
</dbReference>
<dbReference type="CD-CODE" id="DEE660B4">
    <property type="entry name" value="Stress granule"/>
</dbReference>
<dbReference type="ChiTaRS" id="QKI">
    <property type="organism name" value="human"/>
</dbReference>
<dbReference type="EvolutionaryTrace" id="Q96PU8"/>
<dbReference type="GeneWiki" id="QKI"/>
<dbReference type="GenomeRNAi" id="9444"/>
<dbReference type="Pharos" id="Q96PU8">
    <property type="development level" value="Tbio"/>
</dbReference>
<dbReference type="PRO" id="PR:Q96PU8"/>
<dbReference type="Proteomes" id="UP000005640">
    <property type="component" value="Chromosome 6"/>
</dbReference>
<dbReference type="RNAct" id="Q96PU8">
    <property type="molecule type" value="protein"/>
</dbReference>
<dbReference type="Bgee" id="ENSG00000112531">
    <property type="expression patterns" value="Expressed in endothelial cell and 209 other cell types or tissues"/>
</dbReference>
<dbReference type="ExpressionAtlas" id="Q96PU8">
    <property type="expression patterns" value="baseline and differential"/>
</dbReference>
<dbReference type="GO" id="GO:0010494">
    <property type="term" value="C:cytoplasmic stress granule"/>
    <property type="evidence" value="ECO:0000314"/>
    <property type="project" value="UniProtKB"/>
</dbReference>
<dbReference type="GO" id="GO:0005829">
    <property type="term" value="C:cytosol"/>
    <property type="evidence" value="ECO:0000314"/>
    <property type="project" value="UniProtKB"/>
</dbReference>
<dbReference type="GO" id="GO:0005634">
    <property type="term" value="C:nucleus"/>
    <property type="evidence" value="ECO:0000314"/>
    <property type="project" value="UniProtKB"/>
</dbReference>
<dbReference type="GO" id="GO:0045202">
    <property type="term" value="C:synapse"/>
    <property type="evidence" value="ECO:0007669"/>
    <property type="project" value="Ensembl"/>
</dbReference>
<dbReference type="GO" id="GO:0003677">
    <property type="term" value="F:DNA binding"/>
    <property type="evidence" value="ECO:0007669"/>
    <property type="project" value="UniProtKB-KW"/>
</dbReference>
<dbReference type="GO" id="GO:0160089">
    <property type="term" value="F:internal N(7)-methylguanine-containing RNA reader activity"/>
    <property type="evidence" value="ECO:0000314"/>
    <property type="project" value="UniProtKB"/>
</dbReference>
<dbReference type="GO" id="GO:0035198">
    <property type="term" value="F:miRNA binding"/>
    <property type="evidence" value="ECO:0000314"/>
    <property type="project" value="UniProtKB"/>
</dbReference>
<dbReference type="GO" id="GO:0003730">
    <property type="term" value="F:mRNA 3'-UTR binding"/>
    <property type="evidence" value="ECO:0000314"/>
    <property type="project" value="UniProtKB"/>
</dbReference>
<dbReference type="GO" id="GO:0003729">
    <property type="term" value="F:mRNA binding"/>
    <property type="evidence" value="ECO:0000314"/>
    <property type="project" value="UniProtKB"/>
</dbReference>
<dbReference type="GO" id="GO:0003723">
    <property type="term" value="F:RNA binding"/>
    <property type="evidence" value="ECO:0007005"/>
    <property type="project" value="UniProtKB"/>
</dbReference>
<dbReference type="GO" id="GO:0017124">
    <property type="term" value="F:SH3 domain binding"/>
    <property type="evidence" value="ECO:0007669"/>
    <property type="project" value="UniProtKB-KW"/>
</dbReference>
<dbReference type="GO" id="GO:0003713">
    <property type="term" value="F:transcription coactivator activity"/>
    <property type="evidence" value="ECO:0000250"/>
    <property type="project" value="UniProtKB"/>
</dbReference>
<dbReference type="GO" id="GO:0008298">
    <property type="term" value="P:intracellular mRNA localization"/>
    <property type="evidence" value="ECO:0000314"/>
    <property type="project" value="UniProtKB"/>
</dbReference>
<dbReference type="GO" id="GO:0042759">
    <property type="term" value="P:long-chain fatty acid biosynthetic process"/>
    <property type="evidence" value="ECO:0007669"/>
    <property type="project" value="Ensembl"/>
</dbReference>
<dbReference type="GO" id="GO:0014004">
    <property type="term" value="P:microglia differentiation"/>
    <property type="evidence" value="ECO:0000250"/>
    <property type="project" value="UniProtKB"/>
</dbReference>
<dbReference type="GO" id="GO:0048255">
    <property type="term" value="P:mRNA stabilization"/>
    <property type="evidence" value="ECO:0000314"/>
    <property type="project" value="UniProtKB"/>
</dbReference>
<dbReference type="GO" id="GO:0051028">
    <property type="term" value="P:mRNA transport"/>
    <property type="evidence" value="ECO:0000314"/>
    <property type="project" value="UniProt"/>
</dbReference>
<dbReference type="GO" id="GO:0042552">
    <property type="term" value="P:myelination"/>
    <property type="evidence" value="ECO:0007669"/>
    <property type="project" value="Ensembl"/>
</dbReference>
<dbReference type="GO" id="GO:1990764">
    <property type="term" value="P:myofibroblast contraction"/>
    <property type="evidence" value="ECO:0007669"/>
    <property type="project" value="Ensembl"/>
</dbReference>
<dbReference type="GO" id="GO:1905869">
    <property type="term" value="P:negative regulation of 3'-UTR-mediated mRNA stabilization"/>
    <property type="evidence" value="ECO:0000250"/>
    <property type="project" value="UniProtKB"/>
</dbReference>
<dbReference type="GO" id="GO:0016525">
    <property type="term" value="P:negative regulation of angiogenesis"/>
    <property type="evidence" value="ECO:0000314"/>
    <property type="project" value="UniProtKB"/>
</dbReference>
<dbReference type="GO" id="GO:0120163">
    <property type="term" value="P:negative regulation of cold-induced thermogenesis"/>
    <property type="evidence" value="ECO:0000250"/>
    <property type="project" value="UniProtKB"/>
</dbReference>
<dbReference type="GO" id="GO:0045650">
    <property type="term" value="P:negative regulation of macrophage differentiation"/>
    <property type="evidence" value="ECO:0000314"/>
    <property type="project" value="UniProtKB"/>
</dbReference>
<dbReference type="GO" id="GO:2000626">
    <property type="term" value="P:negative regulation of miRNA catabolic process"/>
    <property type="evidence" value="ECO:0000314"/>
    <property type="project" value="UniProtKB"/>
</dbReference>
<dbReference type="GO" id="GO:0017148">
    <property type="term" value="P:negative regulation of translation"/>
    <property type="evidence" value="ECO:0000314"/>
    <property type="project" value="UniProtKB"/>
</dbReference>
<dbReference type="GO" id="GO:0032480">
    <property type="term" value="P:negative regulation of type I interferon production"/>
    <property type="evidence" value="ECO:0000314"/>
    <property type="project" value="UniProtKB"/>
</dbReference>
<dbReference type="GO" id="GO:0045542">
    <property type="term" value="P:positive regulation of cholesterol biosynthetic process"/>
    <property type="evidence" value="ECO:0000250"/>
    <property type="project" value="UniProtKB"/>
</dbReference>
<dbReference type="GO" id="GO:0010628">
    <property type="term" value="P:positive regulation of gene expression"/>
    <property type="evidence" value="ECO:0007669"/>
    <property type="project" value="Ensembl"/>
</dbReference>
<dbReference type="GO" id="GO:0031643">
    <property type="term" value="P:positive regulation of myelination"/>
    <property type="evidence" value="ECO:0000250"/>
    <property type="project" value="UniProtKB"/>
</dbReference>
<dbReference type="GO" id="GO:0048714">
    <property type="term" value="P:positive regulation of oligodendrocyte differentiation"/>
    <property type="evidence" value="ECO:0007669"/>
    <property type="project" value="Ensembl"/>
</dbReference>
<dbReference type="GO" id="GO:0048710">
    <property type="term" value="P:regulation of astrocyte differentiation"/>
    <property type="evidence" value="ECO:0000250"/>
    <property type="project" value="UniProtKB"/>
</dbReference>
<dbReference type="GO" id="GO:0010717">
    <property type="term" value="P:regulation of epithelial to mesenchymal transition"/>
    <property type="evidence" value="ECO:0000314"/>
    <property type="project" value="UniProtKB"/>
</dbReference>
<dbReference type="GO" id="GO:0045649">
    <property type="term" value="P:regulation of macrophage differentiation"/>
    <property type="evidence" value="ECO:0000314"/>
    <property type="project" value="UniProtKB"/>
</dbReference>
<dbReference type="GO" id="GO:0048024">
    <property type="term" value="P:regulation of mRNA splicing, via spliceosome"/>
    <property type="evidence" value="ECO:0000314"/>
    <property type="project" value="UniProtKB"/>
</dbReference>
<dbReference type="GO" id="GO:0007286">
    <property type="term" value="P:spermatid development"/>
    <property type="evidence" value="ECO:0007669"/>
    <property type="project" value="Ensembl"/>
</dbReference>
<dbReference type="GO" id="GO:0160091">
    <property type="term" value="P:spliceosome-depend formation of circular RNA"/>
    <property type="evidence" value="ECO:0000314"/>
    <property type="project" value="UniProtKB"/>
</dbReference>
<dbReference type="GO" id="GO:0035886">
    <property type="term" value="P:vascular associated smooth muscle cell differentiation"/>
    <property type="evidence" value="ECO:0000314"/>
    <property type="project" value="UniProtKB"/>
</dbReference>
<dbReference type="GO" id="GO:0001570">
    <property type="term" value="P:vasculogenesis"/>
    <property type="evidence" value="ECO:0007669"/>
    <property type="project" value="Ensembl"/>
</dbReference>
<dbReference type="CDD" id="cd22465">
    <property type="entry name" value="KH-I_Hqk"/>
    <property type="match status" value="1"/>
</dbReference>
<dbReference type="FunFam" id="1.20.5.4010:FF:000001">
    <property type="entry name" value="protein quaking isoform X1"/>
    <property type="match status" value="1"/>
</dbReference>
<dbReference type="FunFam" id="3.30.1370.10:FF:000055">
    <property type="entry name" value="protein quaking isoform X1"/>
    <property type="match status" value="1"/>
</dbReference>
<dbReference type="Gene3D" id="1.20.5.4010">
    <property type="match status" value="1"/>
</dbReference>
<dbReference type="Gene3D" id="3.30.1370.10">
    <property type="entry name" value="K Homology domain, type 1"/>
    <property type="match status" value="1"/>
</dbReference>
<dbReference type="InterPro" id="IPR045071">
    <property type="entry name" value="BBP-like"/>
</dbReference>
<dbReference type="InterPro" id="IPR055256">
    <property type="entry name" value="KH_1_KHDC4/BBP-like"/>
</dbReference>
<dbReference type="InterPro" id="IPR004087">
    <property type="entry name" value="KH_dom"/>
</dbReference>
<dbReference type="InterPro" id="IPR036612">
    <property type="entry name" value="KH_dom_type_1_sf"/>
</dbReference>
<dbReference type="InterPro" id="IPR032367">
    <property type="entry name" value="Quaking_NLS"/>
</dbReference>
<dbReference type="InterPro" id="IPR032377">
    <property type="entry name" value="STAR_dimer"/>
</dbReference>
<dbReference type="PANTHER" id="PTHR11208:SF125">
    <property type="entry name" value="KH DOMAIN-CONTAINING RNA-BINDING PROTEIN QKI"/>
    <property type="match status" value="1"/>
</dbReference>
<dbReference type="PANTHER" id="PTHR11208">
    <property type="entry name" value="RNA-BINDING PROTEIN RELATED"/>
    <property type="match status" value="1"/>
</dbReference>
<dbReference type="Pfam" id="PF22675">
    <property type="entry name" value="KH-I_KHDC4-BBP"/>
    <property type="match status" value="1"/>
</dbReference>
<dbReference type="Pfam" id="PF16551">
    <property type="entry name" value="Quaking_NLS"/>
    <property type="match status" value="1"/>
</dbReference>
<dbReference type="Pfam" id="PF16544">
    <property type="entry name" value="STAR_dimer"/>
    <property type="match status" value="1"/>
</dbReference>
<dbReference type="SMART" id="SM00322">
    <property type="entry name" value="KH"/>
    <property type="match status" value="1"/>
</dbReference>
<dbReference type="SUPFAM" id="SSF54791">
    <property type="entry name" value="Eukaryotic type KH-domain (KH-domain type I)"/>
    <property type="match status" value="1"/>
</dbReference>
<reference key="1">
    <citation type="journal article" date="2002" name="Jpn. J. Cancer Res.">
        <title>Expression of Hqk encoding a KH RNA binding protein is altered in human glioma.</title>
        <authorList>
            <person name="Li Z.Z."/>
            <person name="Kondo T."/>
            <person name="Murata T."/>
            <person name="Ebersole T.A."/>
            <person name="Nishi T."/>
            <person name="Tada K."/>
            <person name="Ushio Y."/>
            <person name="Yamamura K."/>
            <person name="Abe K."/>
        </authorList>
    </citation>
    <scope>NUCLEOTIDE SEQUENCE [GENOMIC DNA / MRNA] (ISOFORMS QKI5; QKI7 AND QKI7B)</scope>
    <source>
        <tissue>Brain</tissue>
    </source>
</reference>
<reference key="2">
    <citation type="submission" date="1999-04" db="EMBL/GenBank/DDBJ databases">
        <title>Molecular cloning of human QUAKING gene.</title>
        <authorList>
            <person name="Xia J.-H."/>
            <person name="Xiao J.-F."/>
            <person name="He Y.-G."/>
            <person name="Yu K.-P."/>
            <person name="Pan Q."/>
            <person name="Dai H.-P."/>
        </authorList>
    </citation>
    <scope>NUCLEOTIDE SEQUENCE [MRNA] (ISOFORMS QKI5 AND QKI7)</scope>
    <scope>NUCLEOTIDE SEQUENCE [LARGE SCALE MRNA] OF 5-341 (ISOFORM QKI6)</scope>
</reference>
<reference key="3">
    <citation type="submission" date="2005-12" db="EMBL/GenBank/DDBJ databases">
        <authorList>
            <person name="Li H."/>
            <person name="Nong W."/>
            <person name="Zhou G."/>
            <person name="Ke R."/>
            <person name="Shen C."/>
            <person name="Zhong G."/>
            <person name="Liang M."/>
            <person name="Tang Z."/>
            <person name="Huang B."/>
            <person name="Lin L."/>
            <person name="Yang S."/>
        </authorList>
    </citation>
    <scope>NUCLEOTIDE SEQUENCE [LARGE SCALE MRNA] (ISOFORM 2)</scope>
    <scope>NUCLEOTIDE SEQUENCE [LARGE SCALE MRNA] OF 5-341 (ISOFORM 3)</scope>
</reference>
<reference key="4">
    <citation type="journal article" date="2003" name="Nature">
        <title>The DNA sequence and analysis of human chromosome 6.</title>
        <authorList>
            <person name="Mungall A.J."/>
            <person name="Palmer S.A."/>
            <person name="Sims S.K."/>
            <person name="Edwards C.A."/>
            <person name="Ashurst J.L."/>
            <person name="Wilming L."/>
            <person name="Jones M.C."/>
            <person name="Horton R."/>
            <person name="Hunt S.E."/>
            <person name="Scott C.E."/>
            <person name="Gilbert J.G.R."/>
            <person name="Clamp M.E."/>
            <person name="Bethel G."/>
            <person name="Milne S."/>
            <person name="Ainscough R."/>
            <person name="Almeida J.P."/>
            <person name="Ambrose K.D."/>
            <person name="Andrews T.D."/>
            <person name="Ashwell R.I.S."/>
            <person name="Babbage A.K."/>
            <person name="Bagguley C.L."/>
            <person name="Bailey J."/>
            <person name="Banerjee R."/>
            <person name="Barker D.J."/>
            <person name="Barlow K.F."/>
            <person name="Bates K."/>
            <person name="Beare D.M."/>
            <person name="Beasley H."/>
            <person name="Beasley O."/>
            <person name="Bird C.P."/>
            <person name="Blakey S.E."/>
            <person name="Bray-Allen S."/>
            <person name="Brook J."/>
            <person name="Brown A.J."/>
            <person name="Brown J.Y."/>
            <person name="Burford D.C."/>
            <person name="Burrill W."/>
            <person name="Burton J."/>
            <person name="Carder C."/>
            <person name="Carter N.P."/>
            <person name="Chapman J.C."/>
            <person name="Clark S.Y."/>
            <person name="Clark G."/>
            <person name="Clee C.M."/>
            <person name="Clegg S."/>
            <person name="Cobley V."/>
            <person name="Collier R.E."/>
            <person name="Collins J.E."/>
            <person name="Colman L.K."/>
            <person name="Corby N.R."/>
            <person name="Coville G.J."/>
            <person name="Culley K.M."/>
            <person name="Dhami P."/>
            <person name="Davies J."/>
            <person name="Dunn M."/>
            <person name="Earthrowl M.E."/>
            <person name="Ellington A.E."/>
            <person name="Evans K.A."/>
            <person name="Faulkner L."/>
            <person name="Francis M.D."/>
            <person name="Frankish A."/>
            <person name="Frankland J."/>
            <person name="French L."/>
            <person name="Garner P."/>
            <person name="Garnett J."/>
            <person name="Ghori M.J."/>
            <person name="Gilby L.M."/>
            <person name="Gillson C.J."/>
            <person name="Glithero R.J."/>
            <person name="Grafham D.V."/>
            <person name="Grant M."/>
            <person name="Gribble S."/>
            <person name="Griffiths C."/>
            <person name="Griffiths M.N.D."/>
            <person name="Hall R."/>
            <person name="Halls K.S."/>
            <person name="Hammond S."/>
            <person name="Harley J.L."/>
            <person name="Hart E.A."/>
            <person name="Heath P.D."/>
            <person name="Heathcott R."/>
            <person name="Holmes S.J."/>
            <person name="Howden P.J."/>
            <person name="Howe K.L."/>
            <person name="Howell G.R."/>
            <person name="Huckle E."/>
            <person name="Humphray S.J."/>
            <person name="Humphries M.D."/>
            <person name="Hunt A.R."/>
            <person name="Johnson C.M."/>
            <person name="Joy A.A."/>
            <person name="Kay M."/>
            <person name="Keenan S.J."/>
            <person name="Kimberley A.M."/>
            <person name="King A."/>
            <person name="Laird G.K."/>
            <person name="Langford C."/>
            <person name="Lawlor S."/>
            <person name="Leongamornlert D.A."/>
            <person name="Leversha M."/>
            <person name="Lloyd C.R."/>
            <person name="Lloyd D.M."/>
            <person name="Loveland J.E."/>
            <person name="Lovell J."/>
            <person name="Martin S."/>
            <person name="Mashreghi-Mohammadi M."/>
            <person name="Maslen G.L."/>
            <person name="Matthews L."/>
            <person name="McCann O.T."/>
            <person name="McLaren S.J."/>
            <person name="McLay K."/>
            <person name="McMurray A."/>
            <person name="Moore M.J.F."/>
            <person name="Mullikin J.C."/>
            <person name="Niblett D."/>
            <person name="Nickerson T."/>
            <person name="Novik K.L."/>
            <person name="Oliver K."/>
            <person name="Overton-Larty E.K."/>
            <person name="Parker A."/>
            <person name="Patel R."/>
            <person name="Pearce A.V."/>
            <person name="Peck A.I."/>
            <person name="Phillimore B.J.C.T."/>
            <person name="Phillips S."/>
            <person name="Plumb R.W."/>
            <person name="Porter K.M."/>
            <person name="Ramsey Y."/>
            <person name="Ranby S.A."/>
            <person name="Rice C.M."/>
            <person name="Ross M.T."/>
            <person name="Searle S.M."/>
            <person name="Sehra H.K."/>
            <person name="Sheridan E."/>
            <person name="Skuce C.D."/>
            <person name="Smith S."/>
            <person name="Smith M."/>
            <person name="Spraggon L."/>
            <person name="Squares S.L."/>
            <person name="Steward C.A."/>
            <person name="Sycamore N."/>
            <person name="Tamlyn-Hall G."/>
            <person name="Tester J."/>
            <person name="Theaker A.J."/>
            <person name="Thomas D.W."/>
            <person name="Thorpe A."/>
            <person name="Tracey A."/>
            <person name="Tromans A."/>
            <person name="Tubby B."/>
            <person name="Wall M."/>
            <person name="Wallis J.M."/>
            <person name="West A.P."/>
            <person name="White S.S."/>
            <person name="Whitehead S.L."/>
            <person name="Whittaker H."/>
            <person name="Wild A."/>
            <person name="Willey D.J."/>
            <person name="Wilmer T.E."/>
            <person name="Wood J.M."/>
            <person name="Wray P.W."/>
            <person name="Wyatt J.C."/>
            <person name="Young L."/>
            <person name="Younger R.M."/>
            <person name="Bentley D.R."/>
            <person name="Coulson A."/>
            <person name="Durbin R.M."/>
            <person name="Hubbard T."/>
            <person name="Sulston J.E."/>
            <person name="Dunham I."/>
            <person name="Rogers J."/>
            <person name="Beck S."/>
        </authorList>
    </citation>
    <scope>NUCLEOTIDE SEQUENCE [LARGE SCALE GENOMIC DNA]</scope>
</reference>
<reference key="5">
    <citation type="journal article" date="2004" name="Genome Res.">
        <title>The status, quality, and expansion of the NIH full-length cDNA project: the Mammalian Gene Collection (MGC).</title>
        <authorList>
            <consortium name="The MGC Project Team"/>
        </authorList>
    </citation>
    <scope>NUCLEOTIDE SEQUENCE [LARGE SCALE MRNA] (ISOFORM QKI5)</scope>
    <source>
        <tissue>Placenta</tissue>
        <tissue>Skin</tissue>
    </source>
</reference>
<reference key="6">
    <citation type="journal article" date="2004" name="Nat. Genet.">
        <title>Complete sequencing and characterization of 21,243 full-length human cDNAs.</title>
        <authorList>
            <person name="Ota T."/>
            <person name="Suzuki Y."/>
            <person name="Nishikawa T."/>
            <person name="Otsuki T."/>
            <person name="Sugiyama T."/>
            <person name="Irie R."/>
            <person name="Wakamatsu A."/>
            <person name="Hayashi K."/>
            <person name="Sato H."/>
            <person name="Nagai K."/>
            <person name="Kimura K."/>
            <person name="Makita H."/>
            <person name="Sekine M."/>
            <person name="Obayashi M."/>
            <person name="Nishi T."/>
            <person name="Shibahara T."/>
            <person name="Tanaka T."/>
            <person name="Ishii S."/>
            <person name="Yamamoto J."/>
            <person name="Saito K."/>
            <person name="Kawai Y."/>
            <person name="Isono Y."/>
            <person name="Nakamura Y."/>
            <person name="Nagahari K."/>
            <person name="Murakami K."/>
            <person name="Yasuda T."/>
            <person name="Iwayanagi T."/>
            <person name="Wagatsuma M."/>
            <person name="Shiratori A."/>
            <person name="Sudo H."/>
            <person name="Hosoiri T."/>
            <person name="Kaku Y."/>
            <person name="Kodaira H."/>
            <person name="Kondo H."/>
            <person name="Sugawara M."/>
            <person name="Takahashi M."/>
            <person name="Kanda K."/>
            <person name="Yokoi T."/>
            <person name="Furuya T."/>
            <person name="Kikkawa E."/>
            <person name="Omura Y."/>
            <person name="Abe K."/>
            <person name="Kamihara K."/>
            <person name="Katsuta N."/>
            <person name="Sato K."/>
            <person name="Tanikawa M."/>
            <person name="Yamazaki M."/>
            <person name="Ninomiya K."/>
            <person name="Ishibashi T."/>
            <person name="Yamashita H."/>
            <person name="Murakawa K."/>
            <person name="Fujimori K."/>
            <person name="Tanai H."/>
            <person name="Kimata M."/>
            <person name="Watanabe M."/>
            <person name="Hiraoka S."/>
            <person name="Chiba Y."/>
            <person name="Ishida S."/>
            <person name="Ono Y."/>
            <person name="Takiguchi S."/>
            <person name="Watanabe S."/>
            <person name="Yosida M."/>
            <person name="Hotuta T."/>
            <person name="Kusano J."/>
            <person name="Kanehori K."/>
            <person name="Takahashi-Fujii A."/>
            <person name="Hara H."/>
            <person name="Tanase T.-O."/>
            <person name="Nomura Y."/>
            <person name="Togiya S."/>
            <person name="Komai F."/>
            <person name="Hara R."/>
            <person name="Takeuchi K."/>
            <person name="Arita M."/>
            <person name="Imose N."/>
            <person name="Musashino K."/>
            <person name="Yuuki H."/>
            <person name="Oshima A."/>
            <person name="Sasaki N."/>
            <person name="Aotsuka S."/>
            <person name="Yoshikawa Y."/>
            <person name="Matsunawa H."/>
            <person name="Ichihara T."/>
            <person name="Shiohata N."/>
            <person name="Sano S."/>
            <person name="Moriya S."/>
            <person name="Momiyama H."/>
            <person name="Satoh N."/>
            <person name="Takami S."/>
            <person name="Terashima Y."/>
            <person name="Suzuki O."/>
            <person name="Nakagawa S."/>
            <person name="Senoh A."/>
            <person name="Mizoguchi H."/>
            <person name="Goto Y."/>
            <person name="Shimizu F."/>
            <person name="Wakebe H."/>
            <person name="Hishigaki H."/>
            <person name="Watanabe T."/>
            <person name="Sugiyama A."/>
            <person name="Takemoto M."/>
            <person name="Kawakami B."/>
            <person name="Yamazaki M."/>
            <person name="Watanabe K."/>
            <person name="Kumagai A."/>
            <person name="Itakura S."/>
            <person name="Fukuzumi Y."/>
            <person name="Fujimori Y."/>
            <person name="Komiyama M."/>
            <person name="Tashiro H."/>
            <person name="Tanigami A."/>
            <person name="Fujiwara T."/>
            <person name="Ono T."/>
            <person name="Yamada K."/>
            <person name="Fujii Y."/>
            <person name="Ozaki K."/>
            <person name="Hirao M."/>
            <person name="Ohmori Y."/>
            <person name="Kawabata A."/>
            <person name="Hikiji T."/>
            <person name="Kobatake N."/>
            <person name="Inagaki H."/>
            <person name="Ikema Y."/>
            <person name="Okamoto S."/>
            <person name="Okitani R."/>
            <person name="Kawakami T."/>
            <person name="Noguchi S."/>
            <person name="Itoh T."/>
            <person name="Shigeta K."/>
            <person name="Senba T."/>
            <person name="Matsumura K."/>
            <person name="Nakajima Y."/>
            <person name="Mizuno T."/>
            <person name="Morinaga M."/>
            <person name="Sasaki M."/>
            <person name="Togashi T."/>
            <person name="Oyama M."/>
            <person name="Hata H."/>
            <person name="Watanabe M."/>
            <person name="Komatsu T."/>
            <person name="Mizushima-Sugano J."/>
            <person name="Satoh T."/>
            <person name="Shirai Y."/>
            <person name="Takahashi Y."/>
            <person name="Nakagawa K."/>
            <person name="Okumura K."/>
            <person name="Nagase T."/>
            <person name="Nomura N."/>
            <person name="Kikuchi H."/>
            <person name="Masuho Y."/>
            <person name="Yamashita R."/>
            <person name="Nakai K."/>
            <person name="Yada T."/>
            <person name="Nakamura Y."/>
            <person name="Ohara O."/>
            <person name="Isogai T."/>
            <person name="Sugano S."/>
        </authorList>
    </citation>
    <scope>NUCLEOTIDE SEQUENCE [LARGE SCALE MRNA] OF 15-341 (ISOFORM QKI5)</scope>
    <source>
        <tissue>Embryo</tissue>
    </source>
</reference>
<reference key="7">
    <citation type="journal article" date="2003" name="Mol. Biol. Cell">
        <title>Sam68 RNA binding protein is an in vivo substrate for protein arginine N-methyltransferase 1.</title>
        <authorList>
            <person name="Cote J."/>
            <person name="Boisvert F.-M."/>
            <person name="Boulanger M.-C."/>
            <person name="Bedford M.T."/>
            <person name="Richard S."/>
        </authorList>
    </citation>
    <scope>METHYLATION</scope>
</reference>
<reference key="8">
    <citation type="journal article" date="2006" name="Am. J. Med. Genet. B Neuropsychiatr. Genet.">
        <title>Human QKI, a new candidate gene for schizophrenia involved in myelination.</title>
        <authorList>
            <person name="Aeberg K."/>
            <person name="Saetre P."/>
            <person name="Lindholm E."/>
            <person name="Ekholm B."/>
            <person name="Pettersson U."/>
            <person name="Adolfsson R."/>
            <person name="Jazin E."/>
        </authorList>
    </citation>
    <scope>TISSUE SPECIFICITY</scope>
</reference>
<reference key="9">
    <citation type="journal article" date="2006" name="Proc. Natl. Acad. Sci. U.S.A.">
        <title>Human QKI, a potential regulator of mRNA expression of human oligodendrocyte-related genes involved in schizophrenia.</title>
        <authorList>
            <person name="Aberg K."/>
            <person name="Saetre P."/>
            <person name="Jareborg N."/>
            <person name="Jazin E."/>
        </authorList>
    </citation>
    <scope>FUNCTION AS REGULATOR OF OLIGODENDROCYTE DIFFERENTIATION</scope>
</reference>
<reference key="10">
    <citation type="journal article" date="2011" name="BMC Syst. Biol.">
        <title>Initial characterization of the human central proteome.</title>
        <authorList>
            <person name="Burkard T.R."/>
            <person name="Planyavsky M."/>
            <person name="Kaupe I."/>
            <person name="Breitwieser F.P."/>
            <person name="Buerckstuemmer T."/>
            <person name="Bennett K.L."/>
            <person name="Superti-Furga G."/>
            <person name="Colinge J."/>
        </authorList>
    </citation>
    <scope>IDENTIFICATION BY MASS SPECTROMETRY [LARGE SCALE ANALYSIS]</scope>
</reference>
<reference key="11">
    <citation type="journal article" date="2012" name="Mol. Biol. Cell">
        <title>The RNA-binding protein QKI5 is a direct target of C/EBPalpha and delays macrophage differentiation.</title>
        <authorList>
            <person name="Fu H."/>
            <person name="Yang G."/>
            <person name="Wei M."/>
            <person name="Liu L."/>
            <person name="Jin L."/>
            <person name="Lu X."/>
            <person name="Wang L."/>
            <person name="Shen L."/>
            <person name="Zhang J."/>
            <person name="Lu H."/>
            <person name="Yao L."/>
            <person name="Lu Z."/>
        </authorList>
    </citation>
    <scope>FUNCTION (ISOFORM QKI5)</scope>
    <scope>INDUCTION (ISOFORM QKI5)</scope>
</reference>
<reference key="12">
    <citation type="journal article" date="2013" name="J. Proteome Res.">
        <title>Toward a comprehensive characterization of a human cancer cell phosphoproteome.</title>
        <authorList>
            <person name="Zhou H."/>
            <person name="Di Palma S."/>
            <person name="Preisinger C."/>
            <person name="Peng M."/>
            <person name="Polat A.N."/>
            <person name="Heck A.J."/>
            <person name="Mohammed S."/>
        </authorList>
    </citation>
    <scope>PHOSPHORYLATION [LARGE SCALE ANALYSIS] AT SER-188</scope>
    <scope>IDENTIFICATION BY MASS SPECTROMETRY [LARGE SCALE ANALYSIS]</scope>
    <source>
        <tissue>Erythroleukemia</tissue>
    </source>
</reference>
<reference key="13">
    <citation type="journal article" date="2013" name="Nat. Methods">
        <title>A Y2H-seq approach defines the human protein methyltransferase interactome.</title>
        <authorList>
            <person name="Weimann M."/>
            <person name="Grossmann A."/>
            <person name="Woodsmith J."/>
            <person name="Ozkan Z."/>
            <person name="Birth P."/>
            <person name="Meierhofer D."/>
            <person name="Benlasfer N."/>
            <person name="Valovka T."/>
            <person name="Timmermann B."/>
            <person name="Wanker E.E."/>
            <person name="Sauer S."/>
            <person name="Stelzl U."/>
        </authorList>
    </citation>
    <scope>METHYLATION AT ARG-242 BY CARM1</scope>
</reference>
<reference key="14">
    <citation type="journal article" date="2014" name="J. Proteomics">
        <title>An enzyme assisted RP-RPLC approach for in-depth analysis of human liver phosphoproteome.</title>
        <authorList>
            <person name="Bian Y."/>
            <person name="Song C."/>
            <person name="Cheng K."/>
            <person name="Dong M."/>
            <person name="Wang F."/>
            <person name="Huang J."/>
            <person name="Sun D."/>
            <person name="Wang L."/>
            <person name="Ye M."/>
            <person name="Zou H."/>
        </authorList>
    </citation>
    <scope>IDENTIFICATION BY MASS SPECTROMETRY [LARGE SCALE ANALYSIS]</scope>
    <source>
        <tissue>Liver</tissue>
    </source>
</reference>
<reference key="15">
    <citation type="journal article" date="2014" name="Mol. Cell. Proteomics">
        <title>Immunoaffinity enrichment and mass spectrometry analysis of protein methylation.</title>
        <authorList>
            <person name="Guo A."/>
            <person name="Gu H."/>
            <person name="Zhou J."/>
            <person name="Mulhern D."/>
            <person name="Wang Y."/>
            <person name="Lee K.A."/>
            <person name="Yang V."/>
            <person name="Aguiar M."/>
            <person name="Kornhauser J."/>
            <person name="Jia X."/>
            <person name="Ren J."/>
            <person name="Beausoleil S.A."/>
            <person name="Silva J.C."/>
            <person name="Vemulapalli V."/>
            <person name="Bedford M.T."/>
            <person name="Comb M.J."/>
        </authorList>
    </citation>
    <scope>METHYLATION [LARGE SCALE ANALYSIS] AT ARG-227 AND ARG-242</scope>
    <scope>IDENTIFICATION BY MASS SPECTROMETRY [LARGE SCALE ANALYSIS]</scope>
    <source>
        <tissue>Colon carcinoma</tissue>
    </source>
</reference>
<reference key="16">
    <citation type="journal article" date="2015" name="Cell">
        <title>The RNA binding protein quaking regulates formation of circRNAs.</title>
        <authorList>
            <person name="Conn S.J."/>
            <person name="Pillman K.A."/>
            <person name="Toubia J."/>
            <person name="Conn V.M."/>
            <person name="Salmanidis M."/>
            <person name="Phillips C.A."/>
            <person name="Roslan S."/>
            <person name="Schreiber A.W."/>
            <person name="Gregory P.A."/>
            <person name="Goodall G.J."/>
        </authorList>
    </citation>
    <scope>FUNCTION (ISOFORM QKI5)</scope>
</reference>
<reference key="17">
    <citation type="journal article" date="2016" name="Nat. Commun.">
        <title>Quaking promotes monocyte differentiation into pro-atherogenic macrophages by controlling pre-mRNA splicing and gene expression.</title>
        <authorList>
            <person name="de Bruin R.G."/>
            <person name="Shiue L."/>
            <person name="Prins J."/>
            <person name="de Boer H.C."/>
            <person name="Singh A."/>
            <person name="Fagg W.S."/>
            <person name="van Gils J.M."/>
            <person name="Duijs J.M."/>
            <person name="Katzman S."/>
            <person name="Kraaijeveld A.O."/>
            <person name="Boehringer S."/>
            <person name="Leung W.Y."/>
            <person name="Kielbasa S.M."/>
            <person name="Donahue J.P."/>
            <person name="van der Zande P.H."/>
            <person name="Sijbom R."/>
            <person name="van Alem C.M."/>
            <person name="Bot I."/>
            <person name="van Kooten C."/>
            <person name="Jukema J.W."/>
            <person name="Van Esch H."/>
            <person name="Rabelink T.J."/>
            <person name="Kazan H."/>
            <person name="Biessen E.A."/>
            <person name="Ares M. Jr."/>
            <person name="van Zonneveld A.J."/>
            <person name="van der Veer E.P."/>
        </authorList>
    </citation>
    <scope>FUNCTION</scope>
</reference>
<reference key="18">
    <citation type="journal article" date="2019" name="J. Cell Sci.">
        <title>The RNA-binding protein QKI controls alternative splicing in vascular cells, producing an effective model for therapy.</title>
        <authorList>
            <person name="Caines R."/>
            <person name="Cochrane A."/>
            <person name="Kelaini S."/>
            <person name="Vila-Gonzalez M."/>
            <person name="Yang C."/>
            <person name="Eleftheriadou M."/>
            <person name="Moez A."/>
            <person name="Stitt A.W."/>
            <person name="Zeng L."/>
            <person name="Grieve D.J."/>
            <person name="Margariti A."/>
        </authorList>
    </citation>
    <scope>FUNCTION</scope>
</reference>
<reference key="19">
    <citation type="journal article" date="2020" name="J. Biol. Chem.">
        <title>The RNA-binding protein QKI-7 recruits the poly(A) polymerase GLD-2 for 3' adenylation and selective stabilization of microRNA-122.</title>
        <authorList>
            <person name="Hojo H."/>
            <person name="Yashiro Y."/>
            <person name="Noda Y."/>
            <person name="Ogami K."/>
            <person name="Yamagishi R."/>
            <person name="Okada S."/>
            <person name="Hoshino S.I."/>
            <person name="Suzuki T."/>
        </authorList>
    </citation>
    <scope>FUNCTION (ISOFORM QKI7)</scope>
    <scope>INTERACTION WITH TENT2 (ISOFORM QKI7)</scope>
</reference>
<reference key="20">
    <citation type="journal article" date="2020" name="Nat. Commun.">
        <title>Targeting QKI-7 in vivo restores endothelial cell function in diabetes.</title>
        <authorList>
            <person name="Yang C."/>
            <person name="Eleftheriadou M."/>
            <person name="Kelaini S."/>
            <person name="Morrison T."/>
            <person name="Gonzalez M.V."/>
            <person name="Caines R."/>
            <person name="Edwards N."/>
            <person name="Yacoub A."/>
            <person name="Edgar K."/>
            <person name="Moez A."/>
            <person name="Ivetic A."/>
            <person name="Zampetaki A."/>
            <person name="Zeng L."/>
            <person name="Wilkinson F.L."/>
            <person name="Lois N."/>
            <person name="Stitt A.W."/>
            <person name="Grieve D.J."/>
            <person name="Margariti A."/>
        </authorList>
    </citation>
    <scope>FUNCTION (ISOFORM QKI7)</scope>
</reference>
<reference key="21">
    <citation type="journal article" date="2020" name="RNA Biol.">
        <title>The RNA binding protein Quaking represses host interferon response by downregulating MAVS.</title>
        <authorList>
            <person name="Liao K.C."/>
            <person name="Chuo V."/>
            <person name="Fagg W.S."/>
            <person name="Bradrick S.S."/>
            <person name="Pompon J."/>
            <person name="Garcia-Blanco M.A."/>
        </authorList>
    </citation>
    <scope>FUNCTION (ISOFORM QKI5)</scope>
</reference>
<reference key="22">
    <citation type="journal article" date="2021" name="Nucleic Acids Res.">
        <title>The RNA binding protein Quaking represses splicing of the Fibronectin EDA exon and downregulates the interferon response.</title>
        <authorList>
            <person name="Liao K.C."/>
            <person name="Chuo V."/>
            <person name="Fagg W.S."/>
            <person name="Modahl C.M."/>
            <person name="Widen S."/>
            <person name="Garcia-Blanco M.A."/>
        </authorList>
    </citation>
    <scope>FUNCTION</scope>
</reference>
<reference key="23">
    <citation type="journal article" date="2023" name="Cell">
        <title>QKI shuttles internal m7G-modified transcripts into stress granules and modulates mRNA metabolism.</title>
        <authorList>
            <person name="Zhao Z."/>
            <person name="Qing Y."/>
            <person name="Dong L."/>
            <person name="Han L."/>
            <person name="Wu D."/>
            <person name="Li Y."/>
            <person name="Li W."/>
            <person name="Xue J."/>
            <person name="Zhou K."/>
            <person name="Sun M."/>
            <person name="Tan B."/>
            <person name="Chen Z."/>
            <person name="Shen C."/>
            <person name="Gao L."/>
            <person name="Small A."/>
            <person name="Wang K."/>
            <person name="Leung K."/>
            <person name="Zhang Z."/>
            <person name="Qin X."/>
            <person name="Deng X."/>
            <person name="Xia Q."/>
            <person name="Su R."/>
            <person name="Chen J."/>
        </authorList>
    </citation>
    <scope>FUNCTION (ISOFORMS QKI6 AND QKI7)</scope>
    <scope>SUBCELLULAR LOCATION (ISOFORMS QKI5; QKI6 AND QKI7)</scope>
    <scope>INTERACTION WITH G3BP1 (ISOFORM QKI7)</scope>
</reference>
<reference key="24">
    <citation type="journal article" date="2006" name="Science">
        <title>The consensus coding sequences of human breast and colorectal cancers.</title>
        <authorList>
            <person name="Sjoeblom T."/>
            <person name="Jones S."/>
            <person name="Wood L.D."/>
            <person name="Parsons D.W."/>
            <person name="Lin J."/>
            <person name="Barber T.D."/>
            <person name="Mandelker D."/>
            <person name="Leary R.J."/>
            <person name="Ptak J."/>
            <person name="Silliman N."/>
            <person name="Szabo S."/>
            <person name="Buckhaults P."/>
            <person name="Farrell C."/>
            <person name="Meeh P."/>
            <person name="Markowitz S.D."/>
            <person name="Willis J."/>
            <person name="Dawson D."/>
            <person name="Willson J.K.V."/>
            <person name="Gazdar A.F."/>
            <person name="Hartigan J."/>
            <person name="Wu L."/>
            <person name="Liu C."/>
            <person name="Parmigiani G."/>
            <person name="Park B.H."/>
            <person name="Bachman K.E."/>
            <person name="Papadopoulos N."/>
            <person name="Vogelstein B."/>
            <person name="Kinzler K.W."/>
            <person name="Velculescu V.E."/>
        </authorList>
    </citation>
    <scope>VARIANT [LARGE SCALE ANALYSIS] GLN-336</scope>
</reference>
<reference key="25">
    <citation type="journal article" date="2013" name="Genes Dev.">
        <title>Structure-function studies of STAR family Quaking proteins bound to their in vivo RNA target sites.</title>
        <authorList>
            <person name="Teplova M."/>
            <person name="Hafner M."/>
            <person name="Teplov D."/>
            <person name="Essig K."/>
            <person name="Tuschl T."/>
            <person name="Patel D.J."/>
        </authorList>
    </citation>
    <scope>X-RAY CRYSTALLOGRAPHY (3.50 ANGSTROMS) OF 7-204 IN COMPLEX WITH RNA</scope>
    <scope>RNA-BINDING</scope>
    <scope>FUNCTION</scope>
    <scope>SUBUNIT</scope>
    <scope>DOMAIN</scope>
    <scope>MUTAGENESIS OF ASN-97; LYS-120; ARG-124; ARG-130; LYS-190 AND GLN-193</scope>
</reference>
<name>QKI_HUMAN</name>
<accession>Q96PU8</accession>
<accession>Q2I375</accession>
<accession>Q5MJQ1</accession>
<accession>Q969L9</accession>
<accession>Q96EJ3</accession>
<accession>Q96KA3</accession>
<accession>Q96PU6</accession>
<accession>Q96PU7</accession>
<accession>Q9P0X6</accession>
<accession>Q9P0X7</accession>
<accession>Q9P0X8</accession>
<accession>Q9P0X9</accession>
<accession>Q9P0Y0</accession>
<accession>Q9P0Y1</accession>
<protein>
    <recommendedName>
        <fullName evidence="24">KH domain-containing RNA-binding protein QKI</fullName>
    </recommendedName>
    <alternativeName>
        <fullName evidence="17">Protein quaking</fullName>
        <shortName evidence="17">Hqk</shortName>
        <shortName>HqkI</shortName>
    </alternativeName>
</protein>
<evidence type="ECO:0000250" key="1">
    <source>
        <dbReference type="UniProtKB" id="Q17339"/>
    </source>
</evidence>
<evidence type="ECO:0000250" key="2">
    <source>
        <dbReference type="UniProtKB" id="Q9QYS9"/>
    </source>
</evidence>
<evidence type="ECO:0000269" key="3">
    <source>
    </source>
</evidence>
<evidence type="ECO:0000269" key="4">
    <source>
    </source>
</evidence>
<evidence type="ECO:0000269" key="5">
    <source>
    </source>
</evidence>
<evidence type="ECO:0000269" key="6">
    <source>
    </source>
</evidence>
<evidence type="ECO:0000269" key="7">
    <source>
    </source>
</evidence>
<evidence type="ECO:0000269" key="8">
    <source>
    </source>
</evidence>
<evidence type="ECO:0000269" key="9">
    <source>
    </source>
</evidence>
<evidence type="ECO:0000269" key="10">
    <source>
    </source>
</evidence>
<evidence type="ECO:0000269" key="11">
    <source>
    </source>
</evidence>
<evidence type="ECO:0000269" key="12">
    <source>
    </source>
</evidence>
<evidence type="ECO:0000269" key="13">
    <source>
    </source>
</evidence>
<evidence type="ECO:0000269" key="14">
    <source>
    </source>
</evidence>
<evidence type="ECO:0000269" key="15">
    <source>
    </source>
</evidence>
<evidence type="ECO:0000269" key="16">
    <source>
    </source>
</evidence>
<evidence type="ECO:0000303" key="17">
    <source>
    </source>
</evidence>
<evidence type="ECO:0000303" key="18">
    <source>
    </source>
</evidence>
<evidence type="ECO:0000303" key="19">
    <source>
    </source>
</evidence>
<evidence type="ECO:0000303" key="20">
    <source>
    </source>
</evidence>
<evidence type="ECO:0000303" key="21">
    <source>
    </source>
</evidence>
<evidence type="ECO:0000303" key="22">
    <source ref="2"/>
</evidence>
<evidence type="ECO:0000303" key="23">
    <source ref="3"/>
</evidence>
<evidence type="ECO:0000305" key="24"/>
<evidence type="ECO:0000312" key="25">
    <source>
        <dbReference type="HGNC" id="HGNC:21100"/>
    </source>
</evidence>
<evidence type="ECO:0007744" key="26">
    <source>
    </source>
</evidence>
<evidence type="ECO:0007744" key="27">
    <source>
    </source>
</evidence>
<comment type="function">
    <text evidence="2 4 6 8 9 10 11 13 15 16">RNA reader protein, which recognizes and binds specific RNAs, thereby regulating RNA metabolic processes, such as pre-mRNA splicing, circular RNA (circRNA) formation, mRNA export, mRNA stability and/or translation (PubMed:22398723, PubMed:23630077, PubMed:25768908, PubMed:27029405, PubMed:31331967, PubMed:37379838). Involved in various cellular processes, such as mRNA storage into stress granules, apoptosis, lipid deposition, interferon response, glial cell fate and development (PubMed:25768908, PubMed:31829086, PubMed:34428287, PubMed:37379838). Binds to the 5'-NACUAAY-N(1,20)-UAAY-3' RNA core sequence (PubMed:23630077). Acts as a mRNA modification reader that specifically recognizes and binds mRNA transcripts modified by internal N(7)-methylguanine (m7G) (PubMed:37379838). Promotes the formation of circular RNAs (circRNAs) during the epithelial to mesenchymal transition and in cardiomyocytes: acts by binding to sites flanking circRNA-forming exons (PubMed:25768908). CircRNAs are produced by back-splicing circularization of pre-mRNAs (PubMed:25768908). Plays a central role in myelinization via 3 distinct mechanisms (PubMed:16641098). First, acts by protecting and promoting stability of target mRNAs such as MBP, SIRT2 and CDKN1B, which promotes oligodendrocyte differentiation (By similarity). Second, participates in mRNA transport by regulating the nuclear export of MBP mRNA (By similarity). Finally, indirectly regulates mRNA splicing of MAG pre-mRNA during oligodendrocyte differentiation by acting as a negative regulator of MAG exon 12 alternative splicing: acts by binding to HNRNPA1 mRNA splicing factor, preventing its translation (By similarity). Involved in microglia differentiation and remyelination by regulating microexon alternative splicing of the Rho GTPase pathway (By similarity). Involved in macrophage differentiation: promotes monocyte differentiation by regulating pre-mRNA splicing in naive peripheral blood monocytes (PubMed:27029405). Acts as an important regulator of muscle development: required for the contractile function of cardiomyocytes by regulating alternative splicing of cardiomyocyte transcripts (By similarity). Acts as a negative regulator of thermogenesis by decreasing stability, nuclear export and translation of mRNAs encoding PPARGC1A and UCP1 (By similarity). Also required for visceral endoderm function and blood vessel development (By similarity). May also play a role in smooth muscle development (PubMed:31331967). In addition to its RNA-binding activity, also acts as a nuclear transcription coactivator for SREBF2/SREBP2 (By similarity).</text>
</comment>
<comment type="function">
    <molecule>Isoform QKI5</molecule>
    <text evidence="2 6 13 15">Nuclear isoform that acts as an indirect regulator of mRNA splicing (By similarity). Regulates mRNA splicing of MAG pre-mRNA by inhibiting translation of HNRNPA1 mRNA, thereby preventing MAG exon 12 alternative splicing (By similarity). Involved in oligodendrocyte differentiation by promoting stabilization of SIRT2 mRNA (By similarity). Acts as a negative regulator of the interferon response by binding to MAVS mRNA, downregulating its expression (PubMed:31829086). Also inhibits the interferon response by binding to fibrinectin FN1 pre-mRNA, repressing EDA exon inclusion in FN1 (PubMed:34428287). Delays macrophage differentiation by binding to CSF1R mRNA, promoting its degradation (PubMed:22398723). In addition to its RNA-binding activity, also acts as a nuclear transcription coactivator for SREBF2/SREBP2, promoting SREBF2/SREBP2-dependent cholesterol biosynthesis (By similarity). SREBF2/SREBP2-dependent cholesterol biosynthesis participates to myelinization and is required for eye lens transparency (By similarity).</text>
</comment>
<comment type="function">
    <molecule>Isoform QKI6</molecule>
    <text evidence="2 16">Cytosolic isoform that specifically recognizes and binds mRNA transcripts modified by internal N(7)-methylguanine (m7G) (PubMed:37379838). Interaction with G3BP1 promotes localization of m7G-containing mRNAs into stress granules in response to stress, thereby suppressing their translation (PubMed:37379838). Acts as a translational repressor for HNRNPA1 and GLI1 (By similarity). Translation inhibition of HNRNPA1 during oligodendrocyte differentiation prevents inclusion of exon 12 in MAG pre-mRNA splicing (By similarity). Involved in astrocyte differentiation by regulating translation of target mRNAs (By similarity).</text>
</comment>
<comment type="function">
    <molecule>Isoform QKI7</molecule>
    <text evidence="2 12 14 16">Cytosolic isoform that specifically recognizes and binds mRNA transcripts modified by internal N(7)-methylguanine (m7G) (PubMed:37379838). Interaction with G3BP1 promotes localization of m7G-containing mRNAs into stress granules in response to stress, thereby suppressing their translation (PubMed:37379838). Acts as a negative regulator of angiogenesis by binding to mRNAs encoding CDH5, NLGN1 and TNFAIP6, promoting their degradation (PubMed:32732889). Can also induce apoptosis in the cytoplasm (By similarity). Heterodimerization with other isoforms results in nuclear translocation of isoform QKI7 and suppression of apoptosis (By similarity). Also binds some microRNAs: promotes stabilitation of miR-122 by mediating recruitment of poly(A) RNA polymerase TENT2, leading to 3' adenylation and stabilization of miR-122 (PubMed:31792053).</text>
</comment>
<comment type="subunit">
    <text evidence="2 8">Homodimer; does not require RNA to homodimerize (PubMed:23630077). Able to heterodimerize with BICC1 (By similarity).</text>
</comment>
<comment type="subunit">
    <molecule>Isoform QKI6</molecule>
    <text evidence="16">Interacts with G3BP1; directing N(7)-methylguanine (m7G)-containing mRNAs to stress granules to suppress mRNA translation.</text>
</comment>
<comment type="subunit">
    <molecule>Isoform QKI7</molecule>
    <text evidence="12 16">Interacts with G3BP1; directing N(7)-methylguanine (m7G)-containing mRNAs to stress granules to suppress mRNA translation (PubMed:37379838). Interacts with TENT2; promoting stabilization of miR-122 (PubMed:31792053).</text>
</comment>
<comment type="interaction">
    <interactant intactId="EBI-945792">
        <id>Q96PU8</id>
    </interactant>
    <interactant intactId="EBI-2339854">
        <id>Q86X55</id>
        <label>CARM1</label>
    </interactant>
    <organismsDiffer>false</organismsDiffer>
    <experiments>2</experiments>
</comment>
<comment type="interaction">
    <interactant intactId="EBI-945792">
        <id>Q96PU8</id>
    </interactant>
    <interactant intactId="EBI-954200">
        <id>Q96I24</id>
        <label>FUBP3</label>
    </interactant>
    <organismsDiffer>false</organismsDiffer>
    <experiments>5</experiments>
</comment>
<comment type="interaction">
    <interactant intactId="EBI-945792">
        <id>Q96PU8</id>
    </interactant>
    <interactant intactId="EBI-304185">
        <id>P61978</id>
        <label>HNRNPK</label>
    </interactant>
    <organismsDiffer>false</organismsDiffer>
    <experiments>7</experiments>
</comment>
<comment type="interaction">
    <interactant intactId="EBI-945792">
        <id>Q96PU8</id>
    </interactant>
    <interactant intactId="EBI-7060731">
        <id>P61978-2</id>
        <label>HNRNPK</label>
    </interactant>
    <organismsDiffer>false</organismsDiffer>
    <experiments>3</experiments>
</comment>
<comment type="interaction">
    <interactant intactId="EBI-945792">
        <id>Q96PU8</id>
    </interactant>
    <interactant intactId="EBI-535849">
        <id>Q8WVV9</id>
        <label>HNRNPLL</label>
    </interactant>
    <organismsDiffer>false</organismsDiffer>
    <experiments>4</experiments>
</comment>
<comment type="interaction">
    <interactant intactId="EBI-945792">
        <id>Q96PU8</id>
    </interactant>
    <interactant intactId="EBI-1047372">
        <id>Q9UDY8</id>
        <label>MALT1</label>
    </interactant>
    <organismsDiffer>false</organismsDiffer>
    <experiments>2</experiments>
</comment>
<comment type="interaction">
    <interactant intactId="EBI-945792">
        <id>Q96PU8</id>
    </interactant>
    <interactant intactId="EBI-2889252">
        <id>Q96AH0</id>
        <label>NABP1</label>
    </interactant>
    <organismsDiffer>false</organismsDiffer>
    <experiments>3</experiments>
</comment>
<comment type="interaction">
    <interactant intactId="EBI-945792">
        <id>Q96PU8</id>
    </interactant>
    <interactant intactId="EBI-748974">
        <id>Q96CV9</id>
        <label>OPTN</label>
    </interactant>
    <organismsDiffer>false</organismsDiffer>
    <experiments>3</experiments>
</comment>
<comment type="interaction">
    <interactant intactId="EBI-945792">
        <id>Q96PU8</id>
    </interactant>
    <interactant intactId="EBI-946095">
        <id>Q15365</id>
        <label>PCBP1</label>
    </interactant>
    <organismsDiffer>false</organismsDiffer>
    <experiments>3</experiments>
</comment>
<comment type="interaction">
    <interactant intactId="EBI-945792">
        <id>Q96PU8</id>
    </interactant>
    <interactant intactId="EBI-1053424">
        <id>O43741</id>
        <label>PRKAB2</label>
    </interactant>
    <organismsDiffer>false</organismsDiffer>
    <experiments>3</experiments>
</comment>
<comment type="interaction">
    <interactant intactId="EBI-945792">
        <id>Q96PU8</id>
    </interactant>
    <interactant intactId="EBI-350540">
        <id>P26599</id>
        <label>PTBP1</label>
    </interactant>
    <organismsDiffer>false</organismsDiffer>
    <experiments>3</experiments>
</comment>
<comment type="interaction">
    <interactant intactId="EBI-945792">
        <id>Q96PU8</id>
    </interactant>
    <interactant intactId="EBI-945906">
        <id>Q9NWB1</id>
        <label>RBFOX1</label>
    </interactant>
    <organismsDiffer>false</organismsDiffer>
    <experiments>2</experiments>
</comment>
<comment type="interaction">
    <interactant intactId="EBI-945792">
        <id>Q96PU8</id>
    </interactant>
    <interactant intactId="EBI-746056">
        <id>O43251</id>
        <label>RBFOX2</label>
    </interactant>
    <organismsDiffer>false</organismsDiffer>
    <experiments>4</experiments>
</comment>
<comment type="interaction">
    <interactant intactId="EBI-945792">
        <id>Q96PU8</id>
    </interactant>
    <interactant intactId="EBI-741332">
        <id>P57052</id>
        <label>RBM11</label>
    </interactant>
    <organismsDiffer>false</organismsDiffer>
    <experiments>3</experiments>
</comment>
<comment type="interaction">
    <interactant intactId="EBI-945792">
        <id>Q96PU8</id>
    </interactant>
    <interactant intactId="EBI-740322">
        <id>Q93062</id>
        <label>RBPMS</label>
    </interactant>
    <organismsDiffer>false</organismsDiffer>
    <experiments>5</experiments>
</comment>
<comment type="interaction">
    <interactant intactId="EBI-945792">
        <id>Q96PU8</id>
    </interactant>
    <interactant intactId="EBI-607085">
        <id>P09012</id>
        <label>SNRPA</label>
    </interactant>
    <organismsDiffer>false</organismsDiffer>
    <experiments>4</experiments>
</comment>
<comment type="interaction">
    <interactant intactId="EBI-945792">
        <id>Q96PU8</id>
    </interactant>
    <interactant intactId="EBI-11064654">
        <id>Q01085-2</id>
        <label>TIAL1</label>
    </interactant>
    <organismsDiffer>false</organismsDiffer>
    <experiments>3</experiments>
</comment>
<comment type="subcellular location">
    <subcellularLocation>
        <location evidence="16">Nucleus</location>
    </subcellularLocation>
    <subcellularLocation>
        <location evidence="16">Cytoplasm</location>
    </subcellularLocation>
</comment>
<comment type="subcellular location">
    <molecule>Isoform QKI5</molecule>
    <subcellularLocation>
        <location evidence="16">Nucleus</location>
    </subcellularLocation>
    <subcellularLocation>
        <location evidence="16">Cytoplasm</location>
    </subcellularLocation>
    <text evidence="2 16">Localizes predominantly in the nucleus and at lower levels in cytoplasm (PubMed:37379838). It shuttles between the cytoplasm and the nucleus (By similarity).</text>
</comment>
<comment type="subcellular location">
    <molecule>Isoform QKI6</molecule>
    <subcellularLocation>
        <location evidence="16">Cytoplasm</location>
        <location evidence="16">Cytosol</location>
    </subcellularLocation>
    <subcellularLocation>
        <location evidence="16">Nucleus</location>
    </subcellularLocation>
    <text evidence="16">Localizes predominantly in the cytoplasm and at lower levels in nucleus.</text>
</comment>
<comment type="subcellular location">
    <molecule>Isoform QKI7</molecule>
    <subcellularLocation>
        <location evidence="16">Cytoplasm</location>
        <location evidence="16">Cytosol</location>
    </subcellularLocation>
    <subcellularLocation>
        <location evidence="16">Cytoplasm</location>
        <location evidence="16">Stress granule</location>
    </subcellularLocation>
    <subcellularLocation>
        <location evidence="16">Nucleus</location>
    </subcellularLocation>
    <text evidence="16">Localizes predominantly in the cytoplasm and at much lower levels in nucleus (PubMed:37379838). Shuttles between the cytosol and stress granules in response to stress (PubMed:37379838).</text>
</comment>
<comment type="alternative products">
    <event type="alternative splicing"/>
    <isoform>
        <id>Q96PU8-1</id>
        <name evidence="21">QKI5</name>
        <name>HQK-5</name>
        <name>QKI-5</name>
        <sequence type="displayed"/>
    </isoform>
    <isoform>
        <id>Q96PU8-3</id>
        <name>2</name>
        <sequence type="described" ref="VSP_019188"/>
    </isoform>
    <isoform>
        <id>Q96PU8-5</id>
        <name>3</name>
        <sequence type="described" ref="VSP_019188 VSP_019190"/>
    </isoform>
    <isoform>
        <id>Q96PU8-6</id>
        <name evidence="21">QKI7</name>
        <name>HQK-7</name>
        <name evidence="20">QKI-7</name>
        <sequence type="described" ref="VSP_019190"/>
    </isoform>
    <isoform>
        <id>Q96PU8-8</id>
        <name>QKI7B</name>
        <name>HQK-7B</name>
        <sequence type="described" ref="VSP_019191"/>
    </isoform>
    <isoform>
        <id>Q96PU8-9</id>
        <name evidence="21">QKI6</name>
        <name evidence="19">QKI-6</name>
        <sequence type="described" ref="VSP_019189"/>
    </isoform>
</comment>
<comment type="tissue specificity">
    <text evidence="3">Expressed in the frontal cortex of brain. Down-regulated in the brain of schizophrenic patients.</text>
</comment>
<comment type="induction">
    <molecule>Isoform QKI5</molecule>
    <text evidence="6">Expression is activated by CEBPA furing macrophage differentiation.</text>
</comment>
<comment type="domain">
    <text evidence="8">The KH domain and the Qua2 region are involved in RNA binding.</text>
</comment>
<comment type="PTM">
    <text evidence="2">Methylated by PRMT1.</text>
</comment>
<comment type="PTM">
    <text evidence="2">Tyrosine phosphorylated at its C-terminus, probably by FYN. Phosphorylation leads to decreased mRNA-binding affinity, affecting transport and/or stabilization of MBP mRNA (By similarity).</text>
</comment>
<comment type="PTM">
    <text evidence="2">Ubiquitinated by RNF6 in macrophages, leading to its degradation.</text>
</comment>
<comment type="similarity">
    <text evidence="24">Belongs to the quaking family.</text>
</comment>
<comment type="sequence caution" evidence="24">
    <conflict type="miscellaneous discrepancy">
        <sequence resource="EMBL-CDS" id="AAF63412"/>
    </conflict>
    <text>Chimeric cDNA.</text>
</comment>
<comment type="sequence caution" evidence="24">
    <conflict type="erroneous initiation">
        <sequence resource="EMBL-CDS" id="AAF63413"/>
    </conflict>
    <text>Extended N-terminus.</text>
</comment>
<comment type="sequence caution" evidence="24">
    <conflict type="miscellaneous discrepancy">
        <sequence resource="EMBL-CDS" id="AAF63413"/>
    </conflict>
    <text>Cloning artifact in N-terminus.</text>
</comment>
<comment type="sequence caution" evidence="24">
    <conflict type="erroneous initiation">
        <sequence resource="EMBL-CDS" id="AAF63414"/>
    </conflict>
    <text>Extended N-terminus.</text>
</comment>
<comment type="sequence caution" evidence="24">
    <conflict type="miscellaneous discrepancy">
        <sequence resource="EMBL-CDS" id="AAF63414"/>
    </conflict>
    <text>Cloning artifact in N-terminus.</text>
</comment>
<comment type="sequence caution" evidence="24">
    <conflict type="miscellaneous discrepancy">
        <sequence resource="EMBL-CDS" id="AAF63415"/>
    </conflict>
    <text>Chimeric cDNA.</text>
</comment>
<comment type="sequence caution" evidence="24">
    <conflict type="miscellaneous discrepancy">
        <sequence resource="EMBL-CDS" id="AAF63416"/>
    </conflict>
    <text>Chimeric cDNA.</text>
</comment>
<comment type="sequence caution" evidence="24">
    <conflict type="erroneous initiation">
        <sequence resource="EMBL-CDS" id="AAF63417"/>
    </conflict>
    <text>Extended N-terminus.</text>
</comment>
<comment type="sequence caution" evidence="24">
    <conflict type="miscellaneous discrepancy">
        <sequence resource="EMBL-CDS" id="AAF63417"/>
    </conflict>
    <text>Cloning artifact in N-terminus.</text>
</comment>
<comment type="sequence caution" evidence="24">
    <conflict type="erroneous initiation">
        <sequence resource="EMBL-CDS" id="BAB55032"/>
    </conflict>
    <text>Truncated N-terminus.</text>
</comment>
<gene>
    <name evidence="18 25" type="primary">QKI</name>
    <name evidence="17" type="synonym">HKQ</name>
</gene>
<proteinExistence type="evidence at protein level"/>
<sequence>MVGEMETKEKPKPTPDYLMQLMNDKKLMSSLPNFCGIFNHLERLLDEEISRVRKDMYNDTLNGSTEKRSAELPDAVGPIVQLQEKLYVPVKEYPDFNFVGRILGPRGLTAKQLEAETGCKIMVRGKGSMRDKKKEEQNRGKPNWEHLNEDLHVLITVEDAQNRAEIKLKRAVEEVKKLLVPAAEGEDSLKKMQLMELAILNGTYRDANIKSPALAFSLAATAQAAPRIITGPAPVLPPAALRTPTPAGPTIMPLIRQIQTAVMPNGTPHPTAAIVPPGPEAGLIYTPYEYPYTLAPATSILEYPIEPSGVLGAVATKVRRHDMRVHPYQRIVTADRAATGN</sequence>
<keyword id="KW-0002">3D-structure</keyword>
<keyword id="KW-0025">Alternative splicing</keyword>
<keyword id="KW-0963">Cytoplasm</keyword>
<keyword id="KW-0217">Developmental protein</keyword>
<keyword id="KW-0221">Differentiation</keyword>
<keyword id="KW-0238">DNA-binding</keyword>
<keyword id="KW-0488">Methylation</keyword>
<keyword id="KW-0507">mRNA processing</keyword>
<keyword id="KW-0508">mRNA splicing</keyword>
<keyword id="KW-0509">mRNA transport</keyword>
<keyword id="KW-0539">Nucleus</keyword>
<keyword id="KW-0597">Phosphoprotein</keyword>
<keyword id="KW-1267">Proteomics identification</keyword>
<keyword id="KW-1185">Reference proteome</keyword>
<keyword id="KW-0694">RNA-binding</keyword>
<keyword id="KW-0729">SH3-binding</keyword>
<keyword id="KW-0810">Translation regulation</keyword>
<keyword id="KW-0813">Transport</keyword>
<keyword id="KW-0832">Ubl conjugation</keyword>